<name>VORA_PYRAB</name>
<protein>
    <recommendedName>
        <fullName>Ketoisovalerate oxidoreductase subunit VorA</fullName>
        <shortName>VOR</shortName>
        <ecNumber>1.2.7.7</ecNumber>
    </recommendedName>
    <alternativeName>
        <fullName>2-oxoisovalerate ferredoxin reductase subunit alpha</fullName>
    </alternativeName>
    <alternativeName>
        <fullName>2-oxoisovalerate oxidoreductase alpha chain</fullName>
    </alternativeName>
</protein>
<dbReference type="EC" id="1.2.7.7"/>
<dbReference type="EMBL" id="AJ248287">
    <property type="protein sequence ID" value="CAB50271.1"/>
    <property type="molecule type" value="Genomic_DNA"/>
</dbReference>
<dbReference type="EMBL" id="HE613800">
    <property type="protein sequence ID" value="CCE70809.1"/>
    <property type="molecule type" value="Genomic_DNA"/>
</dbReference>
<dbReference type="PIR" id="B75047">
    <property type="entry name" value="B75047"/>
</dbReference>
<dbReference type="SMR" id="Q9UYZ1"/>
<dbReference type="STRING" id="272844.PAB1472"/>
<dbReference type="KEGG" id="pab:PAB1472"/>
<dbReference type="PATRIC" id="fig|272844.11.peg.1452"/>
<dbReference type="eggNOG" id="arCOG01608">
    <property type="taxonomic scope" value="Archaea"/>
</dbReference>
<dbReference type="HOGENOM" id="CLU_002569_5_0_2"/>
<dbReference type="PhylomeDB" id="Q9UYZ1"/>
<dbReference type="Proteomes" id="UP000000810">
    <property type="component" value="Chromosome"/>
</dbReference>
<dbReference type="Proteomes" id="UP000009139">
    <property type="component" value="Chromosome"/>
</dbReference>
<dbReference type="GO" id="GO:0043807">
    <property type="term" value="F:3-methyl-2-oxobutanoate dehydrogenase (ferredoxin) activity"/>
    <property type="evidence" value="ECO:0007669"/>
    <property type="project" value="UniProtKB-EC"/>
</dbReference>
<dbReference type="GO" id="GO:0006082">
    <property type="term" value="P:organic acid metabolic process"/>
    <property type="evidence" value="ECO:0007669"/>
    <property type="project" value="UniProtKB-ARBA"/>
</dbReference>
<dbReference type="GO" id="GO:0006979">
    <property type="term" value="P:response to oxidative stress"/>
    <property type="evidence" value="ECO:0007669"/>
    <property type="project" value="TreeGrafter"/>
</dbReference>
<dbReference type="GO" id="GO:0044272">
    <property type="term" value="P:sulfur compound biosynthetic process"/>
    <property type="evidence" value="ECO:0007669"/>
    <property type="project" value="UniProtKB-ARBA"/>
</dbReference>
<dbReference type="CDD" id="cd07034">
    <property type="entry name" value="TPP_PYR_PFOR_IOR-alpha_like"/>
    <property type="match status" value="1"/>
</dbReference>
<dbReference type="FunFam" id="3.40.50.920:FF:000010">
    <property type="entry name" value="Pyruvate ferredoxin oxidoreductase, alpha subunit"/>
    <property type="match status" value="1"/>
</dbReference>
<dbReference type="FunFam" id="3.40.50.970:FF:000012">
    <property type="entry name" value="Pyruvate:ferredoxin (Flavodoxin) oxidoreductase"/>
    <property type="match status" value="1"/>
</dbReference>
<dbReference type="Gene3D" id="3.40.50.920">
    <property type="match status" value="1"/>
</dbReference>
<dbReference type="Gene3D" id="3.40.50.970">
    <property type="match status" value="1"/>
</dbReference>
<dbReference type="InterPro" id="IPR033412">
    <property type="entry name" value="PFOR_II"/>
</dbReference>
<dbReference type="InterPro" id="IPR050722">
    <property type="entry name" value="Pyruvate:ferred/Flavod_OxRd"/>
</dbReference>
<dbReference type="InterPro" id="IPR002880">
    <property type="entry name" value="Pyrv_Fd/Flavodoxin_OxRdtase_N"/>
</dbReference>
<dbReference type="InterPro" id="IPR029061">
    <property type="entry name" value="THDP-binding"/>
</dbReference>
<dbReference type="InterPro" id="IPR009014">
    <property type="entry name" value="Transketo_C/PFOR_II"/>
</dbReference>
<dbReference type="NCBIfam" id="NF006232">
    <property type="entry name" value="PRK08366.1"/>
    <property type="match status" value="1"/>
</dbReference>
<dbReference type="PANTHER" id="PTHR32154">
    <property type="entry name" value="PYRUVATE-FLAVODOXIN OXIDOREDUCTASE-RELATED"/>
    <property type="match status" value="1"/>
</dbReference>
<dbReference type="PANTHER" id="PTHR32154:SF0">
    <property type="entry name" value="PYRUVATE-FLAVODOXIN OXIDOREDUCTASE-RELATED"/>
    <property type="match status" value="1"/>
</dbReference>
<dbReference type="Pfam" id="PF17147">
    <property type="entry name" value="PFOR_II"/>
    <property type="match status" value="1"/>
</dbReference>
<dbReference type="Pfam" id="PF01855">
    <property type="entry name" value="POR_N"/>
    <property type="match status" value="1"/>
</dbReference>
<dbReference type="SUPFAM" id="SSF52518">
    <property type="entry name" value="Thiamin diphosphate-binding fold (THDP-binding)"/>
    <property type="match status" value="1"/>
</dbReference>
<dbReference type="SUPFAM" id="SSF52922">
    <property type="entry name" value="TK C-terminal domain-like"/>
    <property type="match status" value="1"/>
</dbReference>
<reference key="1">
    <citation type="journal article" date="2003" name="Mol. Microbiol.">
        <title>An integrated analysis of the genome of the hyperthermophilic archaeon Pyrococcus abyssi.</title>
        <authorList>
            <person name="Cohen G.N."/>
            <person name="Barbe V."/>
            <person name="Flament D."/>
            <person name="Galperin M."/>
            <person name="Heilig R."/>
            <person name="Lecompte O."/>
            <person name="Poch O."/>
            <person name="Prieur D."/>
            <person name="Querellou J."/>
            <person name="Ripp R."/>
            <person name="Thierry J.-C."/>
            <person name="Van der Oost J."/>
            <person name="Weissenbach J."/>
            <person name="Zivanovic Y."/>
            <person name="Forterre P."/>
        </authorList>
    </citation>
    <scope>NUCLEOTIDE SEQUENCE [LARGE SCALE GENOMIC DNA]</scope>
    <source>
        <strain>GE5 / Orsay</strain>
    </source>
</reference>
<reference key="2">
    <citation type="journal article" date="2012" name="Curr. Microbiol.">
        <title>Re-annotation of two hyperthermophilic archaea Pyrococcus abyssi GE5 and Pyrococcus furiosus DSM 3638.</title>
        <authorList>
            <person name="Gao J."/>
            <person name="Wang J."/>
        </authorList>
    </citation>
    <scope>GENOME REANNOTATION</scope>
    <source>
        <strain>GE5 / Orsay</strain>
    </source>
</reference>
<proteinExistence type="predicted"/>
<comment type="catalytic activity">
    <reaction>
        <text>3-methyl-2-oxobutanoate + 2 oxidized [2Fe-2S]-[ferredoxin] + CoA = 2-methylpropanoyl-CoA + 2 reduced [2Fe-2S]-[ferredoxin] + CO2 + H(+)</text>
        <dbReference type="Rhea" id="RHEA:11712"/>
        <dbReference type="Rhea" id="RHEA-COMP:10000"/>
        <dbReference type="Rhea" id="RHEA-COMP:10001"/>
        <dbReference type="ChEBI" id="CHEBI:11851"/>
        <dbReference type="ChEBI" id="CHEBI:15378"/>
        <dbReference type="ChEBI" id="CHEBI:16526"/>
        <dbReference type="ChEBI" id="CHEBI:33737"/>
        <dbReference type="ChEBI" id="CHEBI:33738"/>
        <dbReference type="ChEBI" id="CHEBI:57287"/>
        <dbReference type="ChEBI" id="CHEBI:57338"/>
        <dbReference type="EC" id="1.2.7.7"/>
    </reaction>
</comment>
<comment type="subunit">
    <text>Heterotetramer of one alpha, one beta, one delta and one gamma chain.</text>
</comment>
<keyword id="KW-0560">Oxidoreductase</keyword>
<accession>Q9UYZ1</accession>
<accession>G8ZHH2</accession>
<feature type="chain" id="PRO_0000099951" description="Ketoisovalerate oxidoreductase subunit VorA">
    <location>
        <begin position="1"/>
        <end position="395"/>
    </location>
</feature>
<sequence>MVEYKPIKKVVSGNYAAAYAVLHARVQVVAAYPITPQTSIIEKIAEFIANGEADIQYIPVESEHSAMAACIGASATGARVFTATSAQGLALMHEMLHWAAGARLPIVMVDVNRAMAPPWSVWDDQTDSLSQRDTGWMQFYAENNQEVYDGVLMAFKVAETVNVPAMVVESAFILSHTYEIVNMIPQELVDEFLPPRKPLYSLADFENPIAVGALATPADYYEFRYKLARAHEEAKKVIKDVGREFGERFGRDYSEMIEKAYIDDADFVFMGMGSLMGTVKEAVELLRKQGYKVGYAKVRWFRPFPREELLEIAESVKGIAVLDRNFSFGQEGILFTEAKGALYNNGARPIMKNYIVGLGGRDFTVSDVKAIAEDMKKVIESGKLDREVEWYHLKR</sequence>
<gene>
    <name type="primary">vorA</name>
    <name type="ordered locus">PYRAB13660</name>
    <name type="ORF">PAB1472</name>
</gene>
<organism>
    <name type="scientific">Pyrococcus abyssi (strain GE5 / Orsay)</name>
    <dbReference type="NCBI Taxonomy" id="272844"/>
    <lineage>
        <taxon>Archaea</taxon>
        <taxon>Methanobacteriati</taxon>
        <taxon>Methanobacteriota</taxon>
        <taxon>Thermococci</taxon>
        <taxon>Thermococcales</taxon>
        <taxon>Thermococcaceae</taxon>
        <taxon>Pyrococcus</taxon>
    </lineage>
</organism>